<keyword id="KW-0025">Alternative splicing</keyword>
<keyword id="KW-1003">Cell membrane</keyword>
<keyword id="KW-1015">Disulfide bond</keyword>
<keyword id="KW-0297">G-protein coupled receptor</keyword>
<keyword id="KW-0325">Glycoprotein</keyword>
<keyword id="KW-0449">Lipoprotein</keyword>
<keyword id="KW-0472">Membrane</keyword>
<keyword id="KW-0564">Palmitate</keyword>
<keyword id="KW-0675">Receptor</keyword>
<keyword id="KW-1185">Reference proteome</keyword>
<keyword id="KW-0807">Transducer</keyword>
<keyword id="KW-0812">Transmembrane</keyword>
<keyword id="KW-1133">Transmembrane helix</keyword>
<evidence type="ECO:0000250" key="1">
    <source>
        <dbReference type="UniProtKB" id="P34969"/>
    </source>
</evidence>
<evidence type="ECO:0000250" key="2">
    <source>
        <dbReference type="UniProtKB" id="Q13639"/>
    </source>
</evidence>
<evidence type="ECO:0000255" key="3"/>
<evidence type="ECO:0000255" key="4">
    <source>
        <dbReference type="PROSITE-ProRule" id="PRU00521"/>
    </source>
</evidence>
<evidence type="ECO:0000269" key="5">
    <source>
    </source>
</evidence>
<evidence type="ECO:0000269" key="6">
    <source>
    </source>
</evidence>
<evidence type="ECO:0000269" key="7">
    <source>
    </source>
</evidence>
<evidence type="ECO:0000269" key="8">
    <source>
    </source>
</evidence>
<evidence type="ECO:0000303" key="9">
    <source>
    </source>
</evidence>
<evidence type="ECO:0000303" key="10">
    <source>
    </source>
</evidence>
<evidence type="ECO:0000305" key="11"/>
<evidence type="ECO:0000312" key="12">
    <source>
        <dbReference type="RGD" id="71034"/>
    </source>
</evidence>
<reference key="1">
    <citation type="journal article" date="1993" name="Proc. Natl. Acad. Sci. U.S.A.">
        <title>Molecular cloning, characterization, and localization of a high-affinity serotonin receptor (5-HT7) activating cAMP formation.</title>
        <authorList>
            <person name="Martial R."/>
            <person name="Traiffort E."/>
            <person name="Leurs R."/>
            <person name="Tardivel-Lacombe J."/>
            <person name="Diaz J."/>
            <person name="Arrang J.-M."/>
            <person name="Schwartz J.-C."/>
        </authorList>
    </citation>
    <scope>NUCLEOTIDE SEQUENCE [GENOMIC DNA] (ISOFORM A)</scope>
    <scope>FUNCTION</scope>
    <scope>TISSUE SPECIFICITY</scope>
    <source>
        <strain>Wistar</strain>
        <tissue>Brain</tissue>
    </source>
</reference>
<reference key="2">
    <citation type="journal article" date="1993" name="DNA Cell Biol.">
        <title>A novel rat serotonin receptor: primary structure, pharmacology, and expression pattern in distinct brain regions.</title>
        <authorList>
            <person name="Meyerhof W."/>
            <person name="Obermueller F."/>
            <person name="Fehr S."/>
            <person name="Richter D."/>
        </authorList>
    </citation>
    <scope>NUCLEOTIDE SEQUENCE [MRNA] (ISOFORM A)</scope>
    <scope>TISSUE SPECIFICITY</scope>
    <source>
        <strain>Wistar</strain>
        <tissue>Brain</tissue>
    </source>
</reference>
<reference key="3">
    <citation type="journal article" date="1993" name="Neuron">
        <title>A novel adenylyl cyclase-activating serotonin receptor (5-HT7) implicated in the regulation of mammalian circadian rhythms.</title>
        <authorList>
            <person name="Lovenberg T.W."/>
            <person name="Baron B.M."/>
            <person name="de Lecea L."/>
            <person name="Miller J.D."/>
            <person name="Prosser R.A."/>
            <person name="Rea M.A."/>
            <person name="Foye P.E."/>
            <person name="Slone A.L."/>
            <person name="Siegel B.W."/>
            <person name="Danielson P.E."/>
            <person name="Sutcliffe G.J."/>
            <person name="Erlander M.G."/>
        </authorList>
    </citation>
    <scope>NUCLEOTIDE SEQUENCE [MRNA] (ISOFORM B)</scope>
    <scope>FUNCTION</scope>
    <source>
        <strain>Sprague-Dawley</strain>
        <tissue>Hypothalamus</tissue>
    </source>
</reference>
<reference key="4">
    <citation type="journal article" date="1993" name="J. Biol. Chem.">
        <title>Molecular cloning and expression of a 5-hydroxytryptamine7 serotonin receptor subtype.</title>
        <authorList>
            <person name="Shen Y."/>
            <person name="Monsma F.J. Jr."/>
            <person name="Metcalf M.A."/>
            <person name="Jose P.A."/>
            <person name="Hamblin M.W."/>
            <person name="Sibley D.R."/>
        </authorList>
    </citation>
    <scope>NUCLEOTIDE SEQUENCE [GENOMIC DNA] (ISOFORM A)</scope>
    <scope>FUNCTION</scope>
    <source>
        <strain>Sprague-Dawley</strain>
    </source>
</reference>
<reference key="5">
    <citation type="journal article" date="1997" name="J. Neurochem.">
        <title>Four 5-hydroxytryptamine7 (5-HT7) receptor isoforms in human and rat produced by alternative splicing: species differences due to altered intron-exon organization.</title>
        <authorList>
            <person name="Heidmann D.E.A."/>
            <person name="Metcalf M.A."/>
            <person name="Kohen R."/>
            <person name="Hamblin M.W."/>
        </authorList>
    </citation>
    <scope>NUCLEOTIDE SEQUENCE (ISOFORM B)</scope>
</reference>
<gene>
    <name evidence="12" type="primary">Htr7</name>
</gene>
<feature type="chain" id="PRO_0000068981" description="5-hydroxytryptamine receptor 7">
    <location>
        <begin position="1"/>
        <end position="448"/>
    </location>
</feature>
<feature type="topological domain" description="Extracellular" evidence="1">
    <location>
        <begin position="1"/>
        <end position="86"/>
    </location>
</feature>
<feature type="transmembrane region" description="Helical; Name=1" evidence="1">
    <location>
        <begin position="87"/>
        <end position="111"/>
    </location>
</feature>
<feature type="topological domain" description="Cytoplasmic" evidence="1">
    <location>
        <begin position="112"/>
        <end position="121"/>
    </location>
</feature>
<feature type="transmembrane region" description="Helical; Name=2" evidence="1">
    <location>
        <begin position="122"/>
        <end position="143"/>
    </location>
</feature>
<feature type="topological domain" description="Extracellular" evidence="1 11">
    <location>
        <begin position="144"/>
        <end position="155"/>
    </location>
</feature>
<feature type="transmembrane region" description="Helical; Name=3" evidence="1">
    <location>
        <begin position="156"/>
        <end position="181"/>
    </location>
</feature>
<feature type="topological domain" description="Cytoplasmic" evidence="1">
    <location>
        <begin position="182"/>
        <end position="201"/>
    </location>
</feature>
<feature type="transmembrane region" description="Helical; Name=4" evidence="1">
    <location>
        <begin position="202"/>
        <end position="222"/>
    </location>
</feature>
<feature type="topological domain" description="Extracellular" evidence="1 11">
    <location>
        <begin position="223"/>
        <end position="240"/>
    </location>
</feature>
<feature type="transmembrane region" description="Helical; Name=5" evidence="1">
    <location>
        <begin position="241"/>
        <end position="263"/>
    </location>
</feature>
<feature type="topological domain" description="Cytoplasmic" evidence="1">
    <location>
        <begin position="264"/>
        <end position="329"/>
    </location>
</feature>
<feature type="transmembrane region" description="Helical; Name=6" evidence="1">
    <location>
        <begin position="330"/>
        <end position="355"/>
    </location>
</feature>
<feature type="topological domain" description="Extracellular" evidence="1">
    <location>
        <begin position="356"/>
        <end position="366"/>
    </location>
</feature>
<feature type="transmembrane region" description="Helical; Name=7" evidence="1">
    <location>
        <begin position="367"/>
        <end position="390"/>
    </location>
</feature>
<feature type="topological domain" description="Cytoplasmic" evidence="1">
    <location>
        <begin position="391"/>
        <end position="448"/>
    </location>
</feature>
<feature type="binding site" evidence="2">
    <location>
        <position position="165"/>
    </location>
    <ligand>
        <name>serotonin</name>
        <dbReference type="ChEBI" id="CHEBI:350546"/>
    </ligand>
</feature>
<feature type="lipid moiety-binding region" description="S-palmitoyl cysteine" evidence="3">
    <location>
        <position position="404"/>
    </location>
</feature>
<feature type="glycosylation site" description="N-linked (GlcNAc...) asparagine" evidence="3">
    <location>
        <position position="5"/>
    </location>
</feature>
<feature type="glycosylation site" description="N-linked (GlcNAc...) asparagine" evidence="3">
    <location>
        <position position="69"/>
    </location>
</feature>
<feature type="disulfide bond" evidence="4">
    <location>
        <begin position="158"/>
        <end position="234"/>
    </location>
</feature>
<feature type="splice variant" id="VSP_001858" description="In isoform B." evidence="9">
    <location>
        <begin position="436"/>
        <end position="448"/>
    </location>
</feature>
<feature type="sequence conflict" description="In Ref. 4; AAA42134." evidence="11" ref="4">
    <original>C</original>
    <variation>S</variation>
    <location>
        <position position="110"/>
    </location>
</feature>
<feature type="sequence conflict" description="In Ref. 2; CAA49352." evidence="11" ref="2">
    <original>G</original>
    <variation>D</variation>
    <location>
        <position position="149"/>
    </location>
</feature>
<feature type="sequence conflict" description="In Ref. 2; CAA49352." evidence="11" ref="2">
    <original>C</original>
    <variation>Y</variation>
    <location>
        <position position="168"/>
    </location>
</feature>
<feature type="sequence conflict" description="In Ref. 2; CAA49352." evidence="11" ref="2">
    <original>R</original>
    <variation>S</variation>
    <location>
        <position position="196"/>
    </location>
</feature>
<feature type="sequence conflict" description="In Ref. 2; CAA49352." evidence="11" ref="2">
    <original>G</original>
    <variation>E</variation>
    <location>
        <position position="199"/>
    </location>
</feature>
<feature type="sequence conflict" description="In Ref. 2; CAA49352." evidence="11" ref="2">
    <original>S</original>
    <variation>N</variation>
    <location>
        <position position="237"/>
    </location>
</feature>
<feature type="sequence conflict" description="In Ref. 2; CAA49352." evidence="11" ref="2">
    <original>L</original>
    <variation>P</variation>
    <location>
        <position position="348"/>
    </location>
</feature>
<feature type="sequence conflict" description="In Ref. 4; AAA42134." evidence="11" ref="4">
    <original>T</original>
    <variation>P</variation>
    <location>
        <position position="396"/>
    </location>
</feature>
<feature type="sequence conflict" description="In Ref. 4; AAA42134." evidence="11" ref="4">
    <original>Y</original>
    <variation>S</variation>
    <location>
        <position position="398"/>
    </location>
</feature>
<accession>P32305</accession>
<accession>P97936</accession>
<protein>
    <recommendedName>
        <fullName>5-hydroxytryptamine receptor 7</fullName>
        <shortName evidence="9">5-HT-7</shortName>
        <shortName evidence="9">5-HT7</shortName>
    </recommendedName>
    <alternativeName>
        <fullName>5-HT-X</fullName>
    </alternativeName>
    <alternativeName>
        <fullName evidence="10">GPRFO</fullName>
    </alternativeName>
    <alternativeName>
        <fullName>Serotonin receptor 7</fullName>
    </alternativeName>
</protein>
<proteinExistence type="evidence at transcript level"/>
<comment type="function">
    <text evidence="5 6 7">G-protein coupled receptor for 5-hydroxytryptamine (serotonin), a biogenic hormone that functions as a neurotransmitter, a hormone and a mitogen (PubMed:8394362, PubMed:8397408, PubMed:8398139). Ligand binding causes a conformation change that triggers signaling via guanine nucleotide-binding proteins (G proteins) and modulates the activity of downstream effectors (PubMed:8394362). HTR7 is coupled to G(s) G alpha proteins and mediates activation of adenylate cyclase activity (PubMed:8394362).</text>
</comment>
<comment type="subcellular location">
    <subcellularLocation>
        <location evidence="1">Cell membrane</location>
        <topology evidence="1">Multi-pass membrane protein</topology>
    </subcellularLocation>
</comment>
<comment type="alternative products">
    <event type="alternative splicing"/>
    <isoform>
        <id>P32305-1</id>
        <name>A</name>
        <sequence type="displayed"/>
    </isoform>
    <isoform>
        <id>P32305-2</id>
        <name>B</name>
        <sequence type="described" ref="VSP_001858"/>
    </isoform>
</comment>
<comment type="tissue specificity">
    <text evidence="6 8">Thalamus, hypothalamus, and the hippocampal rudiments.</text>
</comment>
<comment type="domain">
    <text evidence="2">Specificity for G(s) G alpha proteins is determined by the length of transmembrane regions 5 and 6 (TM5 and TM6).</text>
</comment>
<comment type="similarity">
    <text evidence="4">Belongs to the G-protein coupled receptor 1 family.</text>
</comment>
<comment type="sequence caution" evidence="11">
    <conflict type="erroneous initiation">
        <sequence resource="EMBL-CDS" id="AAA42134"/>
    </conflict>
</comment>
<name>5HT7R_RAT</name>
<organism>
    <name type="scientific">Rattus norvegicus</name>
    <name type="common">Rat</name>
    <dbReference type="NCBI Taxonomy" id="10116"/>
    <lineage>
        <taxon>Eukaryota</taxon>
        <taxon>Metazoa</taxon>
        <taxon>Chordata</taxon>
        <taxon>Craniata</taxon>
        <taxon>Vertebrata</taxon>
        <taxon>Euteleostomi</taxon>
        <taxon>Mammalia</taxon>
        <taxon>Eutheria</taxon>
        <taxon>Euarchontoglires</taxon>
        <taxon>Glires</taxon>
        <taxon>Rodentia</taxon>
        <taxon>Myomorpha</taxon>
        <taxon>Muroidea</taxon>
        <taxon>Muridae</taxon>
        <taxon>Murinae</taxon>
        <taxon>Rattus</taxon>
    </lineage>
</organism>
<sequence length="448" mass="49837">MMDVNSSGRPDLYGHLRSLILPEVGRGLQDLSPDGGAHPVVSSWMPHLLSGFLEVTASPAPTWDAPPDNVSGCGEQINYGRVEKVVIGSILTLITLLTIAGNCLVVISVCFVKKLRQPSNYLIVSLALADLSVAVAVMPFVSVTDLIGGKWIFGHFFCNVFIAMDVMCCTASIMTLCVISIDRYLGITRPLTYPVRQNGKCMAKMILSVWLLSASITLPPLFGWAQNVNDDKVCLISQDFGYTIYSTAVAFYIPMSVMLFMYYQIYKAARKSAAKHKFPGFPRVQPESVISLNGVVKLQKEVEECANLSRLLKHERKNISIFKREQKAATTLGIIVGAFTVCWLPFFLLSTARPFICGTSCSCIPLWVERTCLWLGYANSLINPFIYAFFNRDLRTTYRSLLQCQYRNINRKLSAAGMHEALKLAERPERSEFVLQNSDHCGKKGHDT</sequence>
<dbReference type="EMBL" id="L19654">
    <property type="protein sequence ID" value="AAA40617.1"/>
    <property type="molecule type" value="Genomic_DNA"/>
</dbReference>
<dbReference type="EMBL" id="X69663">
    <property type="protein sequence ID" value="CAA49352.1"/>
    <property type="molecule type" value="mRNA"/>
</dbReference>
<dbReference type="EMBL" id="L22558">
    <property type="protein sequence ID" value="AAA42132.1"/>
    <property type="molecule type" value="mRNA"/>
</dbReference>
<dbReference type="EMBL" id="L15228">
    <property type="protein sequence ID" value="AAA42134.1"/>
    <property type="status" value="ALT_INIT"/>
    <property type="molecule type" value="Genomic_DNA"/>
</dbReference>
<dbReference type="EMBL" id="U68489">
    <property type="protein sequence ID" value="AAB48395.1"/>
    <property type="molecule type" value="mRNA"/>
</dbReference>
<dbReference type="PIR" id="A47519">
    <property type="entry name" value="A47519"/>
</dbReference>
<dbReference type="RefSeq" id="NP_075227.1">
    <molecule id="P32305-2"/>
    <property type="nucleotide sequence ID" value="NM_022938.2"/>
</dbReference>
<dbReference type="RefSeq" id="XP_006231369.1">
    <molecule id="P32305-1"/>
    <property type="nucleotide sequence ID" value="XM_006231307.4"/>
</dbReference>
<dbReference type="RefSeq" id="XP_008772122.1">
    <property type="nucleotide sequence ID" value="XM_008773900.1"/>
</dbReference>
<dbReference type="RefSeq" id="XP_008772123.1">
    <property type="nucleotide sequence ID" value="XM_008773901.1"/>
</dbReference>
<dbReference type="SMR" id="P32305"/>
<dbReference type="FunCoup" id="P32305">
    <property type="interactions" value="794"/>
</dbReference>
<dbReference type="STRING" id="10116.ENSRNOP00000025450"/>
<dbReference type="BindingDB" id="P32305"/>
<dbReference type="ChEMBL" id="CHEMBL3223"/>
<dbReference type="DrugCentral" id="P32305"/>
<dbReference type="GuidetoPHARMACOLOGY" id="12"/>
<dbReference type="GlyCosmos" id="P32305">
    <property type="glycosylation" value="2 sites, No reported glycans"/>
</dbReference>
<dbReference type="GlyGen" id="P32305">
    <property type="glycosylation" value="2 sites"/>
</dbReference>
<dbReference type="PhosphoSitePlus" id="P32305"/>
<dbReference type="PaxDb" id="10116-ENSRNOP00000025450"/>
<dbReference type="Ensembl" id="ENSRNOT00000025450.8">
    <molecule id="P32305-2"/>
    <property type="protein sequence ID" value="ENSRNOP00000025450.6"/>
    <property type="gene ID" value="ENSRNOG00000018827.10"/>
</dbReference>
<dbReference type="Ensembl" id="ENSRNOT00000111885.1">
    <molecule id="P32305-1"/>
    <property type="protein sequence ID" value="ENSRNOP00000082600.1"/>
    <property type="gene ID" value="ENSRNOG00000018827.10"/>
</dbReference>
<dbReference type="GeneID" id="65032"/>
<dbReference type="KEGG" id="rno:65032"/>
<dbReference type="UCSC" id="RGD:71034">
    <molecule id="P32305-1"/>
    <property type="organism name" value="rat"/>
</dbReference>
<dbReference type="AGR" id="RGD:71034"/>
<dbReference type="CTD" id="3363"/>
<dbReference type="RGD" id="71034">
    <property type="gene designation" value="Htr7"/>
</dbReference>
<dbReference type="eggNOG" id="KOG3656">
    <property type="taxonomic scope" value="Eukaryota"/>
</dbReference>
<dbReference type="GeneTree" id="ENSGT01010000222287"/>
<dbReference type="HOGENOM" id="CLU_009579_11_6_1"/>
<dbReference type="InParanoid" id="P32305"/>
<dbReference type="OMA" id="KPLTYPM"/>
<dbReference type="PhylomeDB" id="P32305"/>
<dbReference type="Reactome" id="R-RNO-390666">
    <property type="pathway name" value="Serotonin receptors"/>
</dbReference>
<dbReference type="Reactome" id="R-RNO-9706019">
    <property type="pathway name" value="RHOBTB3 ATPase cycle"/>
</dbReference>
<dbReference type="PRO" id="PR:P32305"/>
<dbReference type="Proteomes" id="UP000002494">
    <property type="component" value="Chromosome 1"/>
</dbReference>
<dbReference type="Bgee" id="ENSRNOG00000018827">
    <property type="expression patterns" value="Expressed in brain and 11 other cell types or tissues"/>
</dbReference>
<dbReference type="ExpressionAtlas" id="P32305">
    <property type="expression patterns" value="baseline and differential"/>
</dbReference>
<dbReference type="GO" id="GO:0043679">
    <property type="term" value="C:axon terminus"/>
    <property type="evidence" value="ECO:0000314"/>
    <property type="project" value="RGD"/>
</dbReference>
<dbReference type="GO" id="GO:0030425">
    <property type="term" value="C:dendrite"/>
    <property type="evidence" value="ECO:0000314"/>
    <property type="project" value="RGD"/>
</dbReference>
<dbReference type="GO" id="GO:0043025">
    <property type="term" value="C:neuronal cell body"/>
    <property type="evidence" value="ECO:0000314"/>
    <property type="project" value="RGD"/>
</dbReference>
<dbReference type="GO" id="GO:0005886">
    <property type="term" value="C:plasma membrane"/>
    <property type="evidence" value="ECO:0000250"/>
    <property type="project" value="UniProtKB"/>
</dbReference>
<dbReference type="GO" id="GO:0045211">
    <property type="term" value="C:postsynaptic membrane"/>
    <property type="evidence" value="ECO:0000314"/>
    <property type="project" value="SynGO"/>
</dbReference>
<dbReference type="GO" id="GO:0042734">
    <property type="term" value="C:presynaptic membrane"/>
    <property type="evidence" value="ECO:0000314"/>
    <property type="project" value="SynGO"/>
</dbReference>
<dbReference type="GO" id="GO:0008021">
    <property type="term" value="C:synaptic vesicle"/>
    <property type="evidence" value="ECO:0000314"/>
    <property type="project" value="RGD"/>
</dbReference>
<dbReference type="GO" id="GO:0004993">
    <property type="term" value="F:G protein-coupled serotonin receptor activity"/>
    <property type="evidence" value="ECO:0000314"/>
    <property type="project" value="RGD"/>
</dbReference>
<dbReference type="GO" id="GO:0030594">
    <property type="term" value="F:neurotransmitter receptor activity"/>
    <property type="evidence" value="ECO:0000314"/>
    <property type="project" value="RGD"/>
</dbReference>
<dbReference type="GO" id="GO:0099589">
    <property type="term" value="F:serotonin receptor activity"/>
    <property type="evidence" value="ECO:0000266"/>
    <property type="project" value="RGD"/>
</dbReference>
<dbReference type="GO" id="GO:0007192">
    <property type="term" value="P:adenylate cyclase-activating serotonin receptor signaling pathway"/>
    <property type="evidence" value="ECO:0000314"/>
    <property type="project" value="RGD"/>
</dbReference>
<dbReference type="GO" id="GO:0048266">
    <property type="term" value="P:behavioral response to pain"/>
    <property type="evidence" value="ECO:0000315"/>
    <property type="project" value="RGD"/>
</dbReference>
<dbReference type="GO" id="GO:0007268">
    <property type="term" value="P:chemical synaptic transmission"/>
    <property type="evidence" value="ECO:0000318"/>
    <property type="project" value="GO_Central"/>
</dbReference>
<dbReference type="GO" id="GO:0007623">
    <property type="term" value="P:circadian rhythm"/>
    <property type="evidence" value="ECO:0007669"/>
    <property type="project" value="InterPro"/>
</dbReference>
<dbReference type="GO" id="GO:0050966">
    <property type="term" value="P:detection of mechanical stimulus involved in sensory perception of pain"/>
    <property type="evidence" value="ECO:0000314"/>
    <property type="project" value="RGD"/>
</dbReference>
<dbReference type="GO" id="GO:0071542">
    <property type="term" value="P:dopaminergic neuron differentiation"/>
    <property type="evidence" value="ECO:0000315"/>
    <property type="project" value="RGD"/>
</dbReference>
<dbReference type="GO" id="GO:0007187">
    <property type="term" value="P:G protein-coupled receptor signaling pathway, coupled to cyclic nucleotide second messenger"/>
    <property type="evidence" value="ECO:0000318"/>
    <property type="project" value="GO_Central"/>
</dbReference>
<dbReference type="GO" id="GO:0060291">
    <property type="term" value="P:long-term synaptic potentiation"/>
    <property type="evidence" value="ECO:0000315"/>
    <property type="project" value="RGD"/>
</dbReference>
<dbReference type="GO" id="GO:0007613">
    <property type="term" value="P:memory"/>
    <property type="evidence" value="ECO:0000315"/>
    <property type="project" value="RGD"/>
</dbReference>
<dbReference type="GO" id="GO:0014063">
    <property type="term" value="P:negative regulation of serotonin secretion"/>
    <property type="evidence" value="ECO:0000315"/>
    <property type="project" value="RGD"/>
</dbReference>
<dbReference type="GO" id="GO:0010976">
    <property type="term" value="P:positive regulation of neuron projection development"/>
    <property type="evidence" value="ECO:0000314"/>
    <property type="project" value="RGD"/>
</dbReference>
<dbReference type="GO" id="GO:0099171">
    <property type="term" value="P:presynaptic modulation of chemical synaptic transmission"/>
    <property type="evidence" value="ECO:0000314"/>
    <property type="project" value="SynGO"/>
</dbReference>
<dbReference type="GO" id="GO:0062086">
    <property type="term" value="P:regulation of vein smooth muscle contraction"/>
    <property type="evidence" value="ECO:0000315"/>
    <property type="project" value="RGD"/>
</dbReference>
<dbReference type="GO" id="GO:0051412">
    <property type="term" value="P:response to corticosterone"/>
    <property type="evidence" value="ECO:0000314"/>
    <property type="project" value="RGD"/>
</dbReference>
<dbReference type="GO" id="GO:0051602">
    <property type="term" value="P:response to electrical stimulus"/>
    <property type="evidence" value="ECO:0000270"/>
    <property type="project" value="RGD"/>
</dbReference>
<dbReference type="GO" id="GO:0007210">
    <property type="term" value="P:serotonin receptor signaling pathway"/>
    <property type="evidence" value="ECO:0000314"/>
    <property type="project" value="RGD"/>
</dbReference>
<dbReference type="GO" id="GO:0014832">
    <property type="term" value="P:urinary bladder smooth muscle contraction"/>
    <property type="evidence" value="ECO:0000315"/>
    <property type="project" value="RGD"/>
</dbReference>
<dbReference type="GO" id="GO:0042310">
    <property type="term" value="P:vasoconstriction"/>
    <property type="evidence" value="ECO:0007669"/>
    <property type="project" value="InterPro"/>
</dbReference>
<dbReference type="CDD" id="cd15329">
    <property type="entry name" value="7tmA_5-HT7"/>
    <property type="match status" value="1"/>
</dbReference>
<dbReference type="FunFam" id="1.20.1070.10:FF:000071">
    <property type="entry name" value="5-hydroxytryptamine (serotonin) receptor 7a"/>
    <property type="match status" value="1"/>
</dbReference>
<dbReference type="Gene3D" id="1.20.1070.10">
    <property type="entry name" value="Rhodopsin 7-helix transmembrane proteins"/>
    <property type="match status" value="1"/>
</dbReference>
<dbReference type="InterPro" id="IPR001069">
    <property type="entry name" value="5HT_7_rcpt"/>
</dbReference>
<dbReference type="InterPro" id="IPR000276">
    <property type="entry name" value="GPCR_Rhodpsn"/>
</dbReference>
<dbReference type="InterPro" id="IPR017452">
    <property type="entry name" value="GPCR_Rhodpsn_7TM"/>
</dbReference>
<dbReference type="PANTHER" id="PTHR24248">
    <property type="entry name" value="ADRENERGIC RECEPTOR-RELATED G-PROTEIN COUPLED RECEPTOR"/>
    <property type="match status" value="1"/>
</dbReference>
<dbReference type="PANTHER" id="PTHR24248:SF199">
    <property type="entry name" value="IP13425P-RELATED"/>
    <property type="match status" value="1"/>
</dbReference>
<dbReference type="Pfam" id="PF00001">
    <property type="entry name" value="7tm_1"/>
    <property type="match status" value="1"/>
</dbReference>
<dbReference type="PRINTS" id="PR00652">
    <property type="entry name" value="5HT7RECEPTR"/>
</dbReference>
<dbReference type="PRINTS" id="PR00237">
    <property type="entry name" value="GPCRRHODOPSN"/>
</dbReference>
<dbReference type="SUPFAM" id="SSF81321">
    <property type="entry name" value="Family A G protein-coupled receptor-like"/>
    <property type="match status" value="1"/>
</dbReference>
<dbReference type="PROSITE" id="PS00237">
    <property type="entry name" value="G_PROTEIN_RECEP_F1_1"/>
    <property type="match status" value="1"/>
</dbReference>
<dbReference type="PROSITE" id="PS50262">
    <property type="entry name" value="G_PROTEIN_RECEP_F1_2"/>
    <property type="match status" value="1"/>
</dbReference>